<gene>
    <name evidence="1" type="primary">E1</name>
</gene>
<comment type="function">
    <text evidence="1">ATP-dependent DNA 3'-5' helicase required for initiation of viral DNA replication. It forms a complex with the viral E2 protein. The E1-E2 complex binds to the replication origin which contains binding sites for both proteins. During the initial step, a dimer of E1 interacts with a dimer of protein E2 leading to a complex that binds the viral origin of replication with high specificity. Then, a second dimer of E1 displaces the E2 dimer in an ATP-dependent manner to form the E1 tetramer. Following this, two E1 monomers are added to each half of the site, which results in the formation of two E1 trimers on the viral ori. Subsequently, two hexamers will be created. The double hexamer acts as a bi-directional helicase machinery and unwinds the viral DNA and then recruits the host DNA polymerase to start replication.</text>
</comment>
<comment type="catalytic activity">
    <reaction evidence="1">
        <text>Couples ATP hydrolysis with the unwinding of duplex DNA by translocating in the 3'-5' direction.</text>
        <dbReference type="EC" id="5.6.2.4"/>
    </reaction>
</comment>
<comment type="catalytic activity">
    <reaction evidence="1">
        <text>ATP + H2O = ADP + phosphate + H(+)</text>
        <dbReference type="Rhea" id="RHEA:13065"/>
        <dbReference type="ChEBI" id="CHEBI:15377"/>
        <dbReference type="ChEBI" id="CHEBI:15378"/>
        <dbReference type="ChEBI" id="CHEBI:30616"/>
        <dbReference type="ChEBI" id="CHEBI:43474"/>
        <dbReference type="ChEBI" id="CHEBI:456216"/>
        <dbReference type="EC" id="5.6.2.4"/>
    </reaction>
</comment>
<comment type="subunit">
    <text evidence="1">Can form hexamers. Interacts with E2 protein; this interaction increases E1 DNA binding specificity. Interacts with host DNA polymerase subunit POLA2. Interacts with host single stranded DNA-binding protein RPA1. Interacts with host TOP1; this interaction stimulates the enzymatic activity of TOP1.</text>
</comment>
<comment type="subcellular location">
    <subcellularLocation>
        <location evidence="1">Host nucleus</location>
    </subcellularLocation>
</comment>
<comment type="PTM">
    <text evidence="1">Phosphorylated.</text>
</comment>
<comment type="PTM">
    <text evidence="1">Sumoylated.</text>
</comment>
<comment type="similarity">
    <text evidence="1">Belongs to the papillomaviridae E1 protein family.</text>
</comment>
<dbReference type="EC" id="5.6.2.4" evidence="1"/>
<dbReference type="EMBL" id="X62844">
    <property type="protein sequence ID" value="CAA44657.1"/>
    <property type="molecule type" value="Genomic_DNA"/>
</dbReference>
<dbReference type="SMR" id="Q02262"/>
<dbReference type="Proteomes" id="UP000000469">
    <property type="component" value="Genome"/>
</dbReference>
<dbReference type="GO" id="GO:0042025">
    <property type="term" value="C:host cell nucleus"/>
    <property type="evidence" value="ECO:0007669"/>
    <property type="project" value="UniProtKB-SubCell"/>
</dbReference>
<dbReference type="GO" id="GO:0005524">
    <property type="term" value="F:ATP binding"/>
    <property type="evidence" value="ECO:0007669"/>
    <property type="project" value="UniProtKB-UniRule"/>
</dbReference>
<dbReference type="GO" id="GO:0016887">
    <property type="term" value="F:ATP hydrolysis activity"/>
    <property type="evidence" value="ECO:0007669"/>
    <property type="project" value="RHEA"/>
</dbReference>
<dbReference type="GO" id="GO:0003677">
    <property type="term" value="F:DNA binding"/>
    <property type="evidence" value="ECO:0007669"/>
    <property type="project" value="UniProtKB-UniRule"/>
</dbReference>
<dbReference type="GO" id="GO:0003678">
    <property type="term" value="F:DNA helicase activity"/>
    <property type="evidence" value="ECO:0007669"/>
    <property type="project" value="UniProtKB-UniRule"/>
</dbReference>
<dbReference type="GO" id="GO:0006260">
    <property type="term" value="P:DNA replication"/>
    <property type="evidence" value="ECO:0007669"/>
    <property type="project" value="UniProtKB-UniRule"/>
</dbReference>
<dbReference type="Gene3D" id="3.40.1310.10">
    <property type="match status" value="1"/>
</dbReference>
<dbReference type="Gene3D" id="3.40.50.300">
    <property type="entry name" value="P-loop containing nucleotide triphosphate hydrolases"/>
    <property type="match status" value="1"/>
</dbReference>
<dbReference type="Gene3D" id="1.10.10.510">
    <property type="entry name" value="Zinc finger, large T-antigen D1 domain"/>
    <property type="match status" value="1"/>
</dbReference>
<dbReference type="HAMAP" id="MF_04000">
    <property type="entry name" value="PPV_E1"/>
    <property type="match status" value="1"/>
</dbReference>
<dbReference type="InterPro" id="IPR014015">
    <property type="entry name" value="Helicase_SF3_DNA-vir"/>
</dbReference>
<dbReference type="InterPro" id="IPR027417">
    <property type="entry name" value="P-loop_NTPase"/>
</dbReference>
<dbReference type="InterPro" id="IPR001177">
    <property type="entry name" value="PPV_DNA_helicase_E1_C"/>
</dbReference>
<dbReference type="InterPro" id="IPR014000">
    <property type="entry name" value="PPV_DNA_helicase_E1_N"/>
</dbReference>
<dbReference type="InterPro" id="IPR046832">
    <property type="entry name" value="PPV_E1_DBD"/>
</dbReference>
<dbReference type="InterPro" id="IPR046935">
    <property type="entry name" value="PPV_E1_DBD_sf"/>
</dbReference>
<dbReference type="InterPro" id="IPR016393">
    <property type="entry name" value="Rep_E1_papillomaV"/>
</dbReference>
<dbReference type="InterPro" id="IPR037102">
    <property type="entry name" value="Znf_lg_T-Ag_D1_dom_sf"/>
</dbReference>
<dbReference type="Pfam" id="PF00519">
    <property type="entry name" value="PPV_E1_C"/>
    <property type="match status" value="1"/>
</dbReference>
<dbReference type="Pfam" id="PF20450">
    <property type="entry name" value="PPV_E1_DBD"/>
    <property type="match status" value="1"/>
</dbReference>
<dbReference type="Pfam" id="PF00524">
    <property type="entry name" value="PPV_E1_N"/>
    <property type="match status" value="1"/>
</dbReference>
<dbReference type="PIRSF" id="PIRSF003383">
    <property type="entry name" value="Rep_E1_papillomaV"/>
    <property type="match status" value="1"/>
</dbReference>
<dbReference type="SUPFAM" id="SSF55464">
    <property type="entry name" value="Origin of replication-binding domain, RBD-like"/>
    <property type="match status" value="1"/>
</dbReference>
<dbReference type="SUPFAM" id="SSF52540">
    <property type="entry name" value="P-loop containing nucleoside triphosphate hydrolases"/>
    <property type="match status" value="1"/>
</dbReference>
<dbReference type="PROSITE" id="PS51206">
    <property type="entry name" value="SF3_HELICASE_1"/>
    <property type="match status" value="1"/>
</dbReference>
<organismHost>
    <name type="scientific">Pan paniscus</name>
    <name type="common">Pygmy chimpanzee</name>
    <name type="synonym">Bonobo</name>
    <dbReference type="NCBI Taxonomy" id="9597"/>
</organismHost>
<reference key="1">
    <citation type="journal article" date="1992" name="Virology">
        <title>Human papillomavirus type 13 and pygmy chimpanzee papillomavirus type 1: comparison of the genome organizations.</title>
        <authorList>
            <person name="van Ranst M."/>
            <person name="Fuse A."/>
            <person name="Fiten P."/>
            <person name="Beuken E."/>
            <person name="Pfister H."/>
            <person name="Burk R.D."/>
            <person name="Opdenakker G."/>
        </authorList>
    </citation>
    <scope>NUCLEOTIDE SEQUENCE [GENOMIC DNA]</scope>
</reference>
<feature type="chain" id="PRO_0000133164" description="Replication protein E1">
    <location>
        <begin position="1"/>
        <end position="648"/>
    </location>
</feature>
<feature type="domain" description="SF3 helicase" evidence="1">
    <location>
        <begin position="451"/>
        <end position="601"/>
    </location>
</feature>
<feature type="region of interest" description="Disordered" evidence="2">
    <location>
        <begin position="153"/>
        <end position="188"/>
    </location>
</feature>
<feature type="region of interest" description="DNA-binding region" evidence="1">
    <location>
        <begin position="186"/>
        <end position="352"/>
    </location>
</feature>
<feature type="short sequence motif" description="Nuclear localization signal" evidence="1">
    <location>
        <begin position="83"/>
        <end position="85"/>
    </location>
</feature>
<feature type="short sequence motif" description="Nuclear export signal" evidence="1">
    <location>
        <begin position="106"/>
        <end position="115"/>
    </location>
</feature>
<feature type="compositionally biased region" description="Basic and acidic residues" evidence="2">
    <location>
        <begin position="165"/>
        <end position="188"/>
    </location>
</feature>
<feature type="binding site" evidence="1">
    <location>
        <begin position="477"/>
        <end position="484"/>
    </location>
    <ligand>
        <name>ATP</name>
        <dbReference type="ChEBI" id="CHEBI:30616"/>
    </ligand>
</feature>
<feature type="modified residue" description="Phosphoserine; by host" evidence="1">
    <location>
        <position position="89"/>
    </location>
</feature>
<feature type="modified residue" description="Phosphoserine; by host" evidence="1">
    <location>
        <position position="93"/>
    </location>
</feature>
<feature type="modified residue" description="Phosphoserine; by host" evidence="1">
    <location>
        <position position="107"/>
    </location>
</feature>
<feature type="cross-link" description="Glycyl lysine isopeptide (Lys-Gly) (interchain with G-Cter in SUMO)" evidence="1">
    <location>
        <position position="558"/>
    </location>
</feature>
<sequence>MADNTGTDNKGTGCSGWFLVEAIVDRKTGEEISDDEDETVEDSGLDMVDFIDDRCITHNSLEAQALLNEQEADAHYAAVQDLKRKYLGSPYVSPLGHIEQSVECDISPRLNAIQLSRKPKKVKRRLFQSREITDSGYGHTEVEVEAATQVERHGEPENGCGGGGHGRDKEGEGQVHTEVHTESEIEHHTGTTRVLELLKCKDIRATLHGKFKQCYGLSFTDLIRQFKSNKTTCEDWVVAAFGVHHSVSEAFEKLIQPLTIYRHIQWLTNEWGMLLLVLLRFKVNKNRCTVARTLATLLNIPEDHMLIEPPKIQSSVAALYWFRTSLSNASIVTGETPEWIARQTIVEHGLADSQFKLTEMVQWAYDNDYCDECDIAFEYAKRADFDSNAKAFLNSNCQAKYVKDCATMCKHYKNAEMKKMTMNQWIKHRSKKIDETGNWKPIVQFLRHQNIEFISFLSKLKLWLQGTPKKNCIAIVGPPDTGKSMFCMSLIKFLGGTVISYVNSSSHFWLQPLCNTKVALLDDATHSCWGYMDTYMRNLLDGNPMSIDRKHKSLALIKCPPLLVTSNIDITTEEKYKYLYSRVTVFKFPNPFPFDRNGNAVYELCDANWKCFFARLSASLDIQDSEDEDDGDTSQAFRCVPGTVVRTV</sequence>
<accession>Q02262</accession>
<proteinExistence type="inferred from homology"/>
<organism>
    <name type="scientific">Pygmy chimpanzee papillomavirus type 1</name>
    <name type="common">PCPV-1</name>
    <dbReference type="NCBI Taxonomy" id="10576"/>
    <lineage>
        <taxon>Viruses</taxon>
        <taxon>Monodnaviria</taxon>
        <taxon>Shotokuvirae</taxon>
        <taxon>Cossaviricota</taxon>
        <taxon>Papovaviricetes</taxon>
        <taxon>Zurhausenvirales</taxon>
        <taxon>Papillomaviridae</taxon>
        <taxon>Firstpapillomavirinae</taxon>
        <taxon>Alphapapillomavirus</taxon>
        <taxon>Alphapapillomavirus 10</taxon>
    </lineage>
</organism>
<keyword id="KW-0067">ATP-binding</keyword>
<keyword id="KW-0235">DNA replication</keyword>
<keyword id="KW-0238">DNA-binding</keyword>
<keyword id="KW-0244">Early protein</keyword>
<keyword id="KW-0347">Helicase</keyword>
<keyword id="KW-1048">Host nucleus</keyword>
<keyword id="KW-0378">Hydrolase</keyword>
<keyword id="KW-0413">Isomerase</keyword>
<keyword id="KW-1017">Isopeptide bond</keyword>
<keyword id="KW-0547">Nucleotide-binding</keyword>
<keyword id="KW-0597">Phosphoprotein</keyword>
<keyword id="KW-1185">Reference proteome</keyword>
<keyword id="KW-0832">Ubl conjugation</keyword>
<name>VE1_PCPV1</name>
<evidence type="ECO:0000255" key="1">
    <source>
        <dbReference type="HAMAP-Rule" id="MF_04000"/>
    </source>
</evidence>
<evidence type="ECO:0000256" key="2">
    <source>
        <dbReference type="SAM" id="MobiDB-lite"/>
    </source>
</evidence>
<protein>
    <recommendedName>
        <fullName evidence="1">Replication protein E1</fullName>
        <ecNumber evidence="1">5.6.2.4</ecNumber>
    </recommendedName>
    <alternativeName>
        <fullName evidence="1">ATP-dependent helicase E1</fullName>
    </alternativeName>
    <alternativeName>
        <fullName evidence="1">DNA 3'-5' helicase E1</fullName>
    </alternativeName>
</protein>